<proteinExistence type="evidence at protein level"/>
<gene>
    <name type="primary">PDHA1</name>
</gene>
<protein>
    <recommendedName>
        <fullName>Pyruvate dehydrogenase E1 component subunit alpha, somatic form, mitochondrial</fullName>
        <ecNumber>1.2.4.1</ecNumber>
    </recommendedName>
    <alternativeName>
        <fullName>PDHE1-A type I</fullName>
    </alternativeName>
</protein>
<feature type="transit peptide" description="Mitochondrion" evidence="1">
    <location>
        <begin position="1" status="less than"/>
        <end position="28"/>
    </location>
</feature>
<feature type="chain" id="PRO_0000020443" description="Pyruvate dehydrogenase E1 component subunit alpha, somatic form, mitochondrial">
    <location>
        <begin position="29"/>
        <end position="389"/>
    </location>
</feature>
<feature type="binding site" evidence="2">
    <location>
        <position position="91"/>
    </location>
    <ligand>
        <name>pyruvate</name>
        <dbReference type="ChEBI" id="CHEBI:15361"/>
    </ligand>
</feature>
<feature type="binding site" evidence="2">
    <location>
        <position position="117"/>
    </location>
    <ligand>
        <name>pyruvate</name>
        <dbReference type="ChEBI" id="CHEBI:15361"/>
    </ligand>
</feature>
<feature type="binding site" evidence="2">
    <location>
        <position position="117"/>
    </location>
    <ligand>
        <name>thiamine diphosphate</name>
        <dbReference type="ChEBI" id="CHEBI:58937"/>
        <note>ligand shared with beta subunit</note>
    </ligand>
</feature>
<feature type="binding site" evidence="2">
    <location>
        <position position="118"/>
    </location>
    <ligand>
        <name>pyruvate</name>
        <dbReference type="ChEBI" id="CHEBI:15361"/>
    </ligand>
</feature>
<feature type="binding site" evidence="2">
    <location>
        <position position="118"/>
    </location>
    <ligand>
        <name>thiamine diphosphate</name>
        <dbReference type="ChEBI" id="CHEBI:58937"/>
        <note>ligand shared with beta subunit</note>
    </ligand>
</feature>
<feature type="binding site" evidence="2">
    <location>
        <position position="156"/>
    </location>
    <ligand>
        <name>pyruvate</name>
        <dbReference type="ChEBI" id="CHEBI:15361"/>
    </ligand>
</feature>
<feature type="binding site" evidence="2">
    <location>
        <position position="164"/>
    </location>
    <ligand>
        <name>pyruvate</name>
        <dbReference type="ChEBI" id="CHEBI:15361"/>
    </ligand>
</feature>
<feature type="binding site" evidence="2">
    <location>
        <position position="164"/>
    </location>
    <ligand>
        <name>thiamine diphosphate</name>
        <dbReference type="ChEBI" id="CHEBI:58937"/>
        <note>ligand shared with beta subunit</note>
    </ligand>
</feature>
<feature type="binding site" evidence="2">
    <location>
        <position position="166"/>
    </location>
    <ligand>
        <name>pyruvate</name>
        <dbReference type="ChEBI" id="CHEBI:15361"/>
    </ligand>
</feature>
<feature type="binding site" evidence="2">
    <location>
        <position position="166"/>
    </location>
    <ligand>
        <name>thiamine diphosphate</name>
        <dbReference type="ChEBI" id="CHEBI:58937"/>
        <note>ligand shared with beta subunit</note>
    </ligand>
</feature>
<feature type="binding site" evidence="2">
    <location>
        <position position="195"/>
    </location>
    <ligand>
        <name>Mg(2+)</name>
        <dbReference type="ChEBI" id="CHEBI:18420"/>
    </ligand>
</feature>
<feature type="binding site" evidence="2">
    <location>
        <position position="195"/>
    </location>
    <ligand>
        <name>pyruvate</name>
        <dbReference type="ChEBI" id="CHEBI:15361"/>
    </ligand>
</feature>
<feature type="binding site" evidence="2">
    <location>
        <position position="195"/>
    </location>
    <ligand>
        <name>thiamine diphosphate</name>
        <dbReference type="ChEBI" id="CHEBI:58937"/>
        <note>ligand shared with beta subunit</note>
    </ligand>
</feature>
<feature type="binding site" evidence="2">
    <location>
        <position position="196"/>
    </location>
    <ligand>
        <name>pyruvate</name>
        <dbReference type="ChEBI" id="CHEBI:15361"/>
    </ligand>
</feature>
<feature type="binding site" evidence="2">
    <location>
        <position position="196"/>
    </location>
    <ligand>
        <name>thiamine diphosphate</name>
        <dbReference type="ChEBI" id="CHEBI:58937"/>
        <note>ligand shared with beta subunit</note>
    </ligand>
</feature>
<feature type="binding site" evidence="2">
    <location>
        <position position="197"/>
    </location>
    <ligand>
        <name>pyruvate</name>
        <dbReference type="ChEBI" id="CHEBI:15361"/>
    </ligand>
</feature>
<feature type="binding site" evidence="2">
    <location>
        <position position="197"/>
    </location>
    <ligand>
        <name>thiamine diphosphate</name>
        <dbReference type="ChEBI" id="CHEBI:58937"/>
        <note>ligand shared with beta subunit</note>
    </ligand>
</feature>
<feature type="binding site" evidence="2">
    <location>
        <position position="224"/>
    </location>
    <ligand>
        <name>Mg(2+)</name>
        <dbReference type="ChEBI" id="CHEBI:18420"/>
    </ligand>
</feature>
<feature type="binding site" evidence="2">
    <location>
        <position position="224"/>
    </location>
    <ligand>
        <name>pyruvate</name>
        <dbReference type="ChEBI" id="CHEBI:15361"/>
    </ligand>
</feature>
<feature type="binding site" evidence="2">
    <location>
        <position position="224"/>
    </location>
    <ligand>
        <name>thiamine diphosphate</name>
        <dbReference type="ChEBI" id="CHEBI:58937"/>
        <note>ligand shared with beta subunit</note>
    </ligand>
</feature>
<feature type="binding site" evidence="2">
    <location>
        <position position="226"/>
    </location>
    <ligand>
        <name>Mg(2+)</name>
        <dbReference type="ChEBI" id="CHEBI:18420"/>
    </ligand>
</feature>
<feature type="binding site" evidence="2">
    <location>
        <position position="226"/>
    </location>
    <ligand>
        <name>pyruvate</name>
        <dbReference type="ChEBI" id="CHEBI:15361"/>
    </ligand>
</feature>
<feature type="binding site" evidence="2">
    <location>
        <position position="291"/>
    </location>
    <ligand>
        <name>thiamine diphosphate</name>
        <dbReference type="ChEBI" id="CHEBI:58937"/>
        <note>ligand shared with beta subunit</note>
    </ligand>
</feature>
<feature type="modified residue" description="N6-acetyllysine; alternate" evidence="3">
    <location>
        <position position="62"/>
    </location>
</feature>
<feature type="modified residue" description="N6-succinyllysine; alternate" evidence="3">
    <location>
        <position position="62"/>
    </location>
</feature>
<feature type="modified residue" description="Phosphoserine; by PDK1" evidence="2">
    <location>
        <position position="231"/>
    </location>
</feature>
<feature type="modified residue" description="N6-acetyllysine; alternate" evidence="3">
    <location>
        <position position="243"/>
    </location>
</feature>
<feature type="modified residue" description="N6-succinyllysine; alternate" evidence="3">
    <location>
        <position position="243"/>
    </location>
</feature>
<feature type="modified residue" description="N6-succinyllysine" evidence="3">
    <location>
        <position position="276"/>
    </location>
</feature>
<feature type="modified residue" description="Phosphoserine; by PDK1, PDK2, PDK3 and PDK4" evidence="2">
    <location>
        <position position="292"/>
    </location>
</feature>
<feature type="modified residue" description="Phosphoserine" evidence="3">
    <location>
        <position position="294"/>
    </location>
</feature>
<feature type="modified residue" description="Phosphoserine; by PDK1, PDK2, PDK3 and PDK4" evidence="2">
    <location>
        <position position="299"/>
    </location>
</feature>
<feature type="modified residue" description="Phosphotyrosine" evidence="3">
    <location>
        <position position="300"/>
    </location>
</feature>
<feature type="modified residue" description="N6-acetyllysine; alternate" evidence="3">
    <location>
        <position position="312"/>
    </location>
</feature>
<feature type="modified residue" description="N6-succinyllysine; alternate" evidence="3">
    <location>
        <position position="312"/>
    </location>
</feature>
<feature type="modified residue" description="N6-acetyllysine" evidence="2">
    <location>
        <position position="320"/>
    </location>
</feature>
<feature type="modified residue" description="N6-acetyllysine" evidence="3">
    <location>
        <position position="335"/>
    </location>
</feature>
<feature type="modified residue" description="N6-succinyllysine" evidence="3">
    <location>
        <position position="384"/>
    </location>
</feature>
<feature type="non-terminal residue">
    <location>
        <position position="1"/>
    </location>
</feature>
<sequence length="389" mass="43121">GKMLAAVSRVLSGVAQKPASRVLVASRTFANDATFEIKKCDLHRLEEGPPVTTVLTREDGLKYYRMMQTVRRMELKADQLYKQKIIRGFCHLCDGQEACCVGLEAGINPTDHLITAYRAHGFTFTRGLSVREILAELTGRRGGCGKGKGGSMHMYAKNFYGGNGIVGAQVPLGAGIALACKYNGKDEVCLTLYGDGAANQGQIFEAYNMAALWKLPCVFICENNRYGMGTSVERAAASTDYYKRGDFIPGLRVDGMDILCVREATRFAAAYCRSGKGPILMELQTYRYHGHSMSDPGVSYRTREEIQEVRSKSDPIMLLKDRMVNSNLASVEELKEIDVEVRKEIEDAAQFATADPEPPLEELGYHIYCNDPPFEVRGANQWIKFKSIS</sequence>
<keyword id="KW-0007">Acetylation</keyword>
<keyword id="KW-0119">Carbohydrate metabolism</keyword>
<keyword id="KW-0313">Glucose metabolism</keyword>
<keyword id="KW-0460">Magnesium</keyword>
<keyword id="KW-0479">Metal-binding</keyword>
<keyword id="KW-0496">Mitochondrion</keyword>
<keyword id="KW-0560">Oxidoreductase</keyword>
<keyword id="KW-0597">Phosphoprotein</keyword>
<keyword id="KW-0670">Pyruvate</keyword>
<keyword id="KW-1185">Reference proteome</keyword>
<keyword id="KW-0786">Thiamine pyrophosphate</keyword>
<keyword id="KW-0809">Transit peptide</keyword>
<keyword id="KW-0816">Tricarboxylic acid cycle</keyword>
<evidence type="ECO:0000250" key="1"/>
<evidence type="ECO:0000250" key="2">
    <source>
        <dbReference type="UniProtKB" id="P08559"/>
    </source>
</evidence>
<evidence type="ECO:0000250" key="3">
    <source>
        <dbReference type="UniProtKB" id="P35486"/>
    </source>
</evidence>
<evidence type="ECO:0000269" key="4">
    <source>
    </source>
</evidence>
<accession>P29804</accession>
<comment type="function">
    <text evidence="4">The pyruvate dehydrogenase complex catalyzes the overall conversion of pyruvate to acetyl-CoA and CO(2), and thereby links the glycolytic pathway to the tricarboxylic cycle.</text>
</comment>
<comment type="catalytic activity">
    <reaction evidence="4">
        <text>N(6)-[(R)-lipoyl]-L-lysyl-[protein] + pyruvate + H(+) = N(6)-[(R)-S(8)-acetyldihydrolipoyl]-L-lysyl-[protein] + CO2</text>
        <dbReference type="Rhea" id="RHEA:19189"/>
        <dbReference type="Rhea" id="RHEA-COMP:10474"/>
        <dbReference type="Rhea" id="RHEA-COMP:10478"/>
        <dbReference type="ChEBI" id="CHEBI:15361"/>
        <dbReference type="ChEBI" id="CHEBI:15378"/>
        <dbReference type="ChEBI" id="CHEBI:16526"/>
        <dbReference type="ChEBI" id="CHEBI:83099"/>
        <dbReference type="ChEBI" id="CHEBI:83111"/>
        <dbReference type="EC" id="1.2.4.1"/>
    </reaction>
</comment>
<comment type="cofactor">
    <cofactor evidence="4">
        <name>thiamine diphosphate</name>
        <dbReference type="ChEBI" id="CHEBI:58937"/>
    </cofactor>
    <cofactor evidence="2">
        <name>Mg(2+)</name>
        <dbReference type="ChEBI" id="CHEBI:18420"/>
    </cofactor>
</comment>
<comment type="activity regulation">
    <text evidence="4">Pyruvate dehydrogenase activity is inhibited by phosphorylation of PDHA1; it is reactivated by dephosphorylation.</text>
</comment>
<comment type="subunit">
    <text evidence="1">Heterotetramer of two PDHA1 and two PDHB subunits. The heterotetramer interacts with DLAT, and is part of the multimeric pyruvate dehydrogenase complex that contains multiple copies of pyruvate dehydrogenase (E1), dihydrolipoamide acetyltransferase (DLAT, E2) and lipoamide dehydrogenase (DLD, E3). These subunits are bound to an inner core composed of about 48 DLAT and 12 PDHX molecules (By similarity).</text>
</comment>
<comment type="subcellular location">
    <subcellularLocation>
        <location evidence="4">Mitochondrion matrix</location>
    </subcellularLocation>
</comment>
<comment type="PTM">
    <text evidence="4">Phosphorylation at Ser-231, Ser-292 and Ser-299 by PDK family kinases inactivates the enzyme; for this phosphorylation at a single site is sufficient. Phosphorylation at Ser-292 interferes with access to active site, and thereby inactivates the enzyme. Dephosphorylation at all three sites, i.e. at Ser-231, Ser-292 and Ser-299, is required for reactivation.</text>
</comment>
<comment type="PTM">
    <text evidence="1">Acetylation alters the phosphorylation pattern. Deacetylated by SIRT3 (By similarity).</text>
</comment>
<organism>
    <name type="scientific">Sus scrofa</name>
    <name type="common">Pig</name>
    <dbReference type="NCBI Taxonomy" id="9823"/>
    <lineage>
        <taxon>Eukaryota</taxon>
        <taxon>Metazoa</taxon>
        <taxon>Chordata</taxon>
        <taxon>Craniata</taxon>
        <taxon>Vertebrata</taxon>
        <taxon>Euteleostomi</taxon>
        <taxon>Mammalia</taxon>
        <taxon>Eutheria</taxon>
        <taxon>Laurasiatheria</taxon>
        <taxon>Artiodactyla</taxon>
        <taxon>Suina</taxon>
        <taxon>Suidae</taxon>
        <taxon>Sus</taxon>
    </lineage>
</organism>
<name>ODPA_PIG</name>
<dbReference type="EC" id="1.2.4.1"/>
<dbReference type="EMBL" id="X52990">
    <property type="protein sequence ID" value="CAA37180.1"/>
    <property type="molecule type" value="mRNA"/>
</dbReference>
<dbReference type="PIR" id="S20813">
    <property type="entry name" value="DEPGPA"/>
</dbReference>
<dbReference type="SMR" id="P29804"/>
<dbReference type="FunCoup" id="P29804">
    <property type="interactions" value="1175"/>
</dbReference>
<dbReference type="STRING" id="9823.ENSSSCP00000029133"/>
<dbReference type="BindingDB" id="P29804"/>
<dbReference type="ChEMBL" id="CHEMBL3774302"/>
<dbReference type="iPTMnet" id="P29804"/>
<dbReference type="PaxDb" id="9823-ENSSSCP00000021757"/>
<dbReference type="PeptideAtlas" id="P29804"/>
<dbReference type="eggNOG" id="KOG0225">
    <property type="taxonomic scope" value="Eukaryota"/>
</dbReference>
<dbReference type="InParanoid" id="P29804"/>
<dbReference type="SABIO-RK" id="P29804"/>
<dbReference type="Proteomes" id="UP000008227">
    <property type="component" value="Unplaced"/>
</dbReference>
<dbReference type="Proteomes" id="UP000314985">
    <property type="component" value="Unplaced"/>
</dbReference>
<dbReference type="Proteomes" id="UP000694570">
    <property type="component" value="Unplaced"/>
</dbReference>
<dbReference type="Proteomes" id="UP000694571">
    <property type="component" value="Unplaced"/>
</dbReference>
<dbReference type="Proteomes" id="UP000694720">
    <property type="component" value="Unplaced"/>
</dbReference>
<dbReference type="Proteomes" id="UP000694722">
    <property type="component" value="Unplaced"/>
</dbReference>
<dbReference type="Proteomes" id="UP000694723">
    <property type="component" value="Unplaced"/>
</dbReference>
<dbReference type="Proteomes" id="UP000694724">
    <property type="component" value="Unplaced"/>
</dbReference>
<dbReference type="Proteomes" id="UP000694725">
    <property type="component" value="Unplaced"/>
</dbReference>
<dbReference type="Proteomes" id="UP000694726">
    <property type="component" value="Unplaced"/>
</dbReference>
<dbReference type="Proteomes" id="UP000694727">
    <property type="component" value="Unplaced"/>
</dbReference>
<dbReference type="Proteomes" id="UP000694728">
    <property type="component" value="Unplaced"/>
</dbReference>
<dbReference type="GO" id="GO:0005759">
    <property type="term" value="C:mitochondrial matrix"/>
    <property type="evidence" value="ECO:0007669"/>
    <property type="project" value="UniProtKB-SubCell"/>
</dbReference>
<dbReference type="GO" id="GO:0045254">
    <property type="term" value="C:pyruvate dehydrogenase complex"/>
    <property type="evidence" value="ECO:0000250"/>
    <property type="project" value="UniProtKB"/>
</dbReference>
<dbReference type="GO" id="GO:0046872">
    <property type="term" value="F:metal ion binding"/>
    <property type="evidence" value="ECO:0007669"/>
    <property type="project" value="UniProtKB-KW"/>
</dbReference>
<dbReference type="GO" id="GO:0004739">
    <property type="term" value="F:pyruvate dehydrogenase (acetyl-transferring) activity"/>
    <property type="evidence" value="ECO:0000318"/>
    <property type="project" value="GO_Central"/>
</dbReference>
<dbReference type="GO" id="GO:0006006">
    <property type="term" value="P:glucose metabolic process"/>
    <property type="evidence" value="ECO:0007669"/>
    <property type="project" value="UniProtKB-KW"/>
</dbReference>
<dbReference type="GO" id="GO:0006086">
    <property type="term" value="P:pyruvate decarboxylation to acetyl-CoA"/>
    <property type="evidence" value="ECO:0000250"/>
    <property type="project" value="UniProtKB"/>
</dbReference>
<dbReference type="GO" id="GO:0006099">
    <property type="term" value="P:tricarboxylic acid cycle"/>
    <property type="evidence" value="ECO:0007669"/>
    <property type="project" value="UniProtKB-KW"/>
</dbReference>
<dbReference type="CDD" id="cd02000">
    <property type="entry name" value="TPP_E1_PDC_ADC_BCADC"/>
    <property type="match status" value="1"/>
</dbReference>
<dbReference type="FunFam" id="3.40.50.970:FF:000020">
    <property type="entry name" value="Pyruvate dehydrogenase E1 component subunit alpha, mitochondrial"/>
    <property type="match status" value="1"/>
</dbReference>
<dbReference type="Gene3D" id="3.40.50.970">
    <property type="match status" value="1"/>
</dbReference>
<dbReference type="InterPro" id="IPR001017">
    <property type="entry name" value="DH_E1"/>
</dbReference>
<dbReference type="InterPro" id="IPR050642">
    <property type="entry name" value="PDH_E1_Alpha_Subunit"/>
</dbReference>
<dbReference type="InterPro" id="IPR017597">
    <property type="entry name" value="Pyrv_DH_E1_asu_subgrp-y"/>
</dbReference>
<dbReference type="InterPro" id="IPR029061">
    <property type="entry name" value="THDP-binding"/>
</dbReference>
<dbReference type="NCBIfam" id="TIGR03182">
    <property type="entry name" value="PDH_E1_alph_y"/>
    <property type="match status" value="1"/>
</dbReference>
<dbReference type="PANTHER" id="PTHR11516:SF60">
    <property type="entry name" value="PYRUVATE DEHYDROGENASE E1 COMPONENT SUBUNIT ALPHA"/>
    <property type="match status" value="1"/>
</dbReference>
<dbReference type="PANTHER" id="PTHR11516">
    <property type="entry name" value="PYRUVATE DEHYDROGENASE E1 COMPONENT, ALPHA SUBUNIT BACTERIAL AND ORGANELLAR"/>
    <property type="match status" value="1"/>
</dbReference>
<dbReference type="Pfam" id="PF00676">
    <property type="entry name" value="E1_dh"/>
    <property type="match status" value="1"/>
</dbReference>
<dbReference type="SUPFAM" id="SSF52518">
    <property type="entry name" value="Thiamin diphosphate-binding fold (THDP-binding)"/>
    <property type="match status" value="1"/>
</dbReference>
<reference key="1">
    <citation type="journal article" date="1990" name="Nucleic Acids Res.">
        <title>Characterisation of a cDNA for porcine PDH-E1 alpha and comparison with the human cDNA.</title>
        <authorList>
            <person name="Sermon K."/>
            <person name="Demeirleir L."/>
            <person name="Elpers I."/>
            <person name="Lissens W."/>
            <person name="Liebaers I."/>
        </authorList>
    </citation>
    <scope>NUCLEOTIDE SEQUENCE [MRNA]</scope>
    <source>
        <tissue>Muscle</tissue>
    </source>
</reference>
<reference key="2">
    <citation type="journal article" date="1979" name="Biochem. J.">
        <title>Regulation of kinase reactions in pig heart pyruvate dehydrogenase complex.</title>
        <authorList>
            <person name="Kerbey A.L."/>
            <person name="Radcliffe P.M."/>
            <person name="Randle P.J."/>
            <person name="Sugden P.H."/>
        </authorList>
    </citation>
    <scope>CATALYTIC ACTIVITY</scope>
    <scope>FUNCTION</scope>
    <scope>ACTIVITY REGULATION</scope>
    <scope>SUBCELLULAR LOCATION</scope>
    <scope>COFACTOR</scope>
    <scope>PHOSPHORYLATION AT SER-231; SER-292 AND SER-299</scope>
</reference>